<organism>
    <name type="scientific">Hyperthermus butylicus (strain DSM 5456 / JCM 9403 / PLM1-5)</name>
    <dbReference type="NCBI Taxonomy" id="415426"/>
    <lineage>
        <taxon>Archaea</taxon>
        <taxon>Thermoproteota</taxon>
        <taxon>Thermoprotei</taxon>
        <taxon>Desulfurococcales</taxon>
        <taxon>Pyrodictiaceae</taxon>
        <taxon>Hyperthermus</taxon>
    </lineage>
</organism>
<accession>A2BM26</accession>
<sequence length="314" mass="34946">MPGPLYGRDLLSIRDLSSEEVWLVIETARQMKLRYYAGERIIPMLKGKTIALIFEKPSTRTRVSMEVAALQLGATPLTFRRDELQLARGEPIKDTARVLSRYVDAIAARVFKHESLEEMAAYASVPVINMLSDLEHPLQALADALTIYEKKGHIKGIKVVYVGDGRNNVAHSLLLVIAKLGGHIVISSPKELTPRKDILEAAQLAAKETGATIELIEDPAEAVRGADVVYTDVWVSMGEESLAEERRRLLQRYQVNEKLMSLASNNAIFMHCLPAHRGEEVTEEVIEGPWSVVWDQAENRLHAQKAVLALILAP</sequence>
<gene>
    <name evidence="2" type="primary">argF</name>
    <name type="ordered locus">Hbut_1203</name>
</gene>
<keyword id="KW-0028">Amino-acid biosynthesis</keyword>
<keyword id="KW-0055">Arginine biosynthesis</keyword>
<keyword id="KW-0963">Cytoplasm</keyword>
<keyword id="KW-1185">Reference proteome</keyword>
<keyword id="KW-0808">Transferase</keyword>
<dbReference type="EC" id="2.1.3.3" evidence="2"/>
<dbReference type="EMBL" id="CP000493">
    <property type="protein sequence ID" value="ABM81037.1"/>
    <property type="molecule type" value="Genomic_DNA"/>
</dbReference>
<dbReference type="RefSeq" id="WP_011822355.1">
    <property type="nucleotide sequence ID" value="NC_008818.1"/>
</dbReference>
<dbReference type="SMR" id="A2BM26"/>
<dbReference type="STRING" id="415426.Hbut_1203"/>
<dbReference type="EnsemblBacteria" id="ABM81037">
    <property type="protein sequence ID" value="ABM81037"/>
    <property type="gene ID" value="Hbut_1203"/>
</dbReference>
<dbReference type="GeneID" id="4781565"/>
<dbReference type="KEGG" id="hbu:Hbut_1203"/>
<dbReference type="eggNOG" id="arCOG00912">
    <property type="taxonomic scope" value="Archaea"/>
</dbReference>
<dbReference type="HOGENOM" id="CLU_043846_3_2_2"/>
<dbReference type="OrthoDB" id="4696at2157"/>
<dbReference type="UniPathway" id="UPA00068">
    <property type="reaction ID" value="UER00112"/>
</dbReference>
<dbReference type="Proteomes" id="UP000002593">
    <property type="component" value="Chromosome"/>
</dbReference>
<dbReference type="GO" id="GO:0005737">
    <property type="term" value="C:cytoplasm"/>
    <property type="evidence" value="ECO:0007669"/>
    <property type="project" value="UniProtKB-SubCell"/>
</dbReference>
<dbReference type="GO" id="GO:0016597">
    <property type="term" value="F:amino acid binding"/>
    <property type="evidence" value="ECO:0007669"/>
    <property type="project" value="InterPro"/>
</dbReference>
<dbReference type="GO" id="GO:0004585">
    <property type="term" value="F:ornithine carbamoyltransferase activity"/>
    <property type="evidence" value="ECO:0007669"/>
    <property type="project" value="UniProtKB-UniRule"/>
</dbReference>
<dbReference type="GO" id="GO:0042450">
    <property type="term" value="P:arginine biosynthetic process via ornithine"/>
    <property type="evidence" value="ECO:0007669"/>
    <property type="project" value="TreeGrafter"/>
</dbReference>
<dbReference type="GO" id="GO:0019240">
    <property type="term" value="P:citrulline biosynthetic process"/>
    <property type="evidence" value="ECO:0007669"/>
    <property type="project" value="TreeGrafter"/>
</dbReference>
<dbReference type="GO" id="GO:0006526">
    <property type="term" value="P:L-arginine biosynthetic process"/>
    <property type="evidence" value="ECO:0007669"/>
    <property type="project" value="UniProtKB-UniRule"/>
</dbReference>
<dbReference type="FunFam" id="3.40.50.1370:FF:000008">
    <property type="entry name" value="Ornithine carbamoyltransferase"/>
    <property type="match status" value="1"/>
</dbReference>
<dbReference type="Gene3D" id="3.40.50.1370">
    <property type="entry name" value="Aspartate/ornithine carbamoyltransferase"/>
    <property type="match status" value="2"/>
</dbReference>
<dbReference type="HAMAP" id="MF_01109">
    <property type="entry name" value="OTCase"/>
    <property type="match status" value="1"/>
</dbReference>
<dbReference type="InterPro" id="IPR006132">
    <property type="entry name" value="Asp/Orn_carbamoyltranf_P-bd"/>
</dbReference>
<dbReference type="InterPro" id="IPR006130">
    <property type="entry name" value="Asp/Orn_carbamoylTrfase"/>
</dbReference>
<dbReference type="InterPro" id="IPR036901">
    <property type="entry name" value="Asp/Orn_carbamoylTrfase_sf"/>
</dbReference>
<dbReference type="InterPro" id="IPR006131">
    <property type="entry name" value="Asp_carbamoyltransf_Asp/Orn-bd"/>
</dbReference>
<dbReference type="InterPro" id="IPR002292">
    <property type="entry name" value="Orn/put_carbamltrans"/>
</dbReference>
<dbReference type="InterPro" id="IPR024904">
    <property type="entry name" value="OTCase_ArgI"/>
</dbReference>
<dbReference type="NCBIfam" id="TIGR00658">
    <property type="entry name" value="orni_carb_tr"/>
    <property type="match status" value="1"/>
</dbReference>
<dbReference type="NCBIfam" id="NF001986">
    <property type="entry name" value="PRK00779.1"/>
    <property type="match status" value="1"/>
</dbReference>
<dbReference type="PANTHER" id="PTHR45753">
    <property type="entry name" value="ORNITHINE CARBAMOYLTRANSFERASE, MITOCHONDRIAL"/>
    <property type="match status" value="1"/>
</dbReference>
<dbReference type="PANTHER" id="PTHR45753:SF3">
    <property type="entry name" value="ORNITHINE TRANSCARBAMYLASE, MITOCHONDRIAL"/>
    <property type="match status" value="1"/>
</dbReference>
<dbReference type="Pfam" id="PF00185">
    <property type="entry name" value="OTCace"/>
    <property type="match status" value="1"/>
</dbReference>
<dbReference type="Pfam" id="PF02729">
    <property type="entry name" value="OTCace_N"/>
    <property type="match status" value="1"/>
</dbReference>
<dbReference type="PRINTS" id="PR00100">
    <property type="entry name" value="AOTCASE"/>
</dbReference>
<dbReference type="PRINTS" id="PR00102">
    <property type="entry name" value="OTCASE"/>
</dbReference>
<dbReference type="SUPFAM" id="SSF53671">
    <property type="entry name" value="Aspartate/ornithine carbamoyltransferase"/>
    <property type="match status" value="1"/>
</dbReference>
<dbReference type="PROSITE" id="PS00097">
    <property type="entry name" value="CARBAMOYLTRANSFERASE"/>
    <property type="match status" value="1"/>
</dbReference>
<evidence type="ECO:0000250" key="1"/>
<evidence type="ECO:0000255" key="2">
    <source>
        <dbReference type="HAMAP-Rule" id="MF_01109"/>
    </source>
</evidence>
<proteinExistence type="inferred from homology"/>
<comment type="function">
    <text evidence="1">Reversibly catalyzes the transfer of the carbamoyl group from carbamoyl phosphate (CP) to the N(epsilon) atom of ornithine (ORN) to produce L-citrulline.</text>
</comment>
<comment type="catalytic activity">
    <reaction evidence="2">
        <text>carbamoyl phosphate + L-ornithine = L-citrulline + phosphate + H(+)</text>
        <dbReference type="Rhea" id="RHEA:19513"/>
        <dbReference type="ChEBI" id="CHEBI:15378"/>
        <dbReference type="ChEBI" id="CHEBI:43474"/>
        <dbReference type="ChEBI" id="CHEBI:46911"/>
        <dbReference type="ChEBI" id="CHEBI:57743"/>
        <dbReference type="ChEBI" id="CHEBI:58228"/>
        <dbReference type="EC" id="2.1.3.3"/>
    </reaction>
</comment>
<comment type="pathway">
    <text evidence="2">Amino-acid biosynthesis; L-arginine biosynthesis; L-arginine from L-ornithine and carbamoyl phosphate: step 1/3.</text>
</comment>
<comment type="subcellular location">
    <subcellularLocation>
        <location evidence="2">Cytoplasm</location>
    </subcellularLocation>
</comment>
<comment type="similarity">
    <text evidence="2">Belongs to the aspartate/ornithine carbamoyltransferase superfamily. OTCase family.</text>
</comment>
<feature type="chain" id="PRO_1000084845" description="Ornithine carbamoyltransferase">
    <location>
        <begin position="1"/>
        <end position="314"/>
    </location>
</feature>
<feature type="binding site" evidence="2">
    <location>
        <begin position="58"/>
        <end position="61"/>
    </location>
    <ligand>
        <name>carbamoyl phosphate</name>
        <dbReference type="ChEBI" id="CHEBI:58228"/>
    </ligand>
</feature>
<feature type="binding site" evidence="2">
    <location>
        <position position="85"/>
    </location>
    <ligand>
        <name>carbamoyl phosphate</name>
        <dbReference type="ChEBI" id="CHEBI:58228"/>
    </ligand>
</feature>
<feature type="binding site" evidence="2">
    <location>
        <position position="109"/>
    </location>
    <ligand>
        <name>carbamoyl phosphate</name>
        <dbReference type="ChEBI" id="CHEBI:58228"/>
    </ligand>
</feature>
<feature type="binding site" evidence="2">
    <location>
        <begin position="136"/>
        <end position="139"/>
    </location>
    <ligand>
        <name>carbamoyl phosphate</name>
        <dbReference type="ChEBI" id="CHEBI:58228"/>
    </ligand>
</feature>
<feature type="binding site" evidence="2">
    <location>
        <position position="168"/>
    </location>
    <ligand>
        <name>L-ornithine</name>
        <dbReference type="ChEBI" id="CHEBI:46911"/>
    </ligand>
</feature>
<feature type="binding site" evidence="2">
    <location>
        <position position="232"/>
    </location>
    <ligand>
        <name>L-ornithine</name>
        <dbReference type="ChEBI" id="CHEBI:46911"/>
    </ligand>
</feature>
<feature type="binding site" evidence="2">
    <location>
        <begin position="236"/>
        <end position="237"/>
    </location>
    <ligand>
        <name>L-ornithine</name>
        <dbReference type="ChEBI" id="CHEBI:46911"/>
    </ligand>
</feature>
<feature type="binding site" evidence="2">
    <location>
        <begin position="272"/>
        <end position="273"/>
    </location>
    <ligand>
        <name>carbamoyl phosphate</name>
        <dbReference type="ChEBI" id="CHEBI:58228"/>
    </ligand>
</feature>
<feature type="binding site" evidence="2">
    <location>
        <position position="300"/>
    </location>
    <ligand>
        <name>carbamoyl phosphate</name>
        <dbReference type="ChEBI" id="CHEBI:58228"/>
    </ligand>
</feature>
<protein>
    <recommendedName>
        <fullName evidence="2">Ornithine carbamoyltransferase</fullName>
        <shortName evidence="2">OTCase</shortName>
        <ecNumber evidence="2">2.1.3.3</ecNumber>
    </recommendedName>
</protein>
<name>OTC_HYPBU</name>
<reference key="1">
    <citation type="journal article" date="2007" name="Archaea">
        <title>The genome of Hyperthermus butylicus: a sulfur-reducing, peptide fermenting, neutrophilic Crenarchaeote growing up to 108 degrees C.</title>
        <authorList>
            <person name="Bruegger K."/>
            <person name="Chen L."/>
            <person name="Stark M."/>
            <person name="Zibat A."/>
            <person name="Redder P."/>
            <person name="Ruepp A."/>
            <person name="Awayez M."/>
            <person name="She Q."/>
            <person name="Garrett R.A."/>
            <person name="Klenk H.-P."/>
        </authorList>
    </citation>
    <scope>NUCLEOTIDE SEQUENCE [LARGE SCALE GENOMIC DNA]</scope>
    <source>
        <strain>DSM 5456 / JCM 9403 / PLM1-5</strain>
    </source>
</reference>